<accession>Q72J70</accession>
<evidence type="ECO:0000255" key="1">
    <source>
        <dbReference type="HAMAP-Rule" id="MF_00314"/>
    </source>
</evidence>
<gene>
    <name evidence="1" type="primary">atpC</name>
    <name type="ordered locus">TT_C0909</name>
</gene>
<feature type="chain" id="PRO_1000048374" description="V-type ATP synthase subunit C">
    <location>
        <begin position="1"/>
        <end position="323"/>
    </location>
</feature>
<reference key="1">
    <citation type="journal article" date="2004" name="Nat. Biotechnol.">
        <title>The genome sequence of the extreme thermophile Thermus thermophilus.</title>
        <authorList>
            <person name="Henne A."/>
            <person name="Brueggemann H."/>
            <person name="Raasch C."/>
            <person name="Wiezer A."/>
            <person name="Hartsch T."/>
            <person name="Liesegang H."/>
            <person name="Johann A."/>
            <person name="Lienard T."/>
            <person name="Gohl O."/>
            <person name="Martinez-Arias R."/>
            <person name="Jacobi C."/>
            <person name="Starkuviene V."/>
            <person name="Schlenczeck S."/>
            <person name="Dencker S."/>
            <person name="Huber R."/>
            <person name="Klenk H.-P."/>
            <person name="Kramer W."/>
            <person name="Merkl R."/>
            <person name="Gottschalk G."/>
            <person name="Fritz H.-J."/>
        </authorList>
    </citation>
    <scope>NUCLEOTIDE SEQUENCE [LARGE SCALE GENOMIC DNA]</scope>
    <source>
        <strain>ATCC BAA-163 / DSM 7039 / HB27</strain>
    </source>
</reference>
<dbReference type="EMBL" id="AE017221">
    <property type="protein sequence ID" value="AAS81253.1"/>
    <property type="molecule type" value="Genomic_DNA"/>
</dbReference>
<dbReference type="RefSeq" id="WP_011173336.1">
    <property type="nucleotide sequence ID" value="NC_005835.1"/>
</dbReference>
<dbReference type="SMR" id="Q72J70"/>
<dbReference type="KEGG" id="tth:TT_C0909"/>
<dbReference type="eggNOG" id="COG1527">
    <property type="taxonomic scope" value="Bacteria"/>
</dbReference>
<dbReference type="HOGENOM" id="CLU_073549_0_0_0"/>
<dbReference type="OrthoDB" id="30360at2"/>
<dbReference type="Proteomes" id="UP000000592">
    <property type="component" value="Chromosome"/>
</dbReference>
<dbReference type="GO" id="GO:0033179">
    <property type="term" value="C:proton-transporting V-type ATPase, V0 domain"/>
    <property type="evidence" value="ECO:0007669"/>
    <property type="project" value="InterPro"/>
</dbReference>
<dbReference type="GO" id="GO:0005524">
    <property type="term" value="F:ATP binding"/>
    <property type="evidence" value="ECO:0007669"/>
    <property type="project" value="UniProtKB-UniRule"/>
</dbReference>
<dbReference type="GO" id="GO:0046933">
    <property type="term" value="F:proton-transporting ATP synthase activity, rotational mechanism"/>
    <property type="evidence" value="ECO:0007669"/>
    <property type="project" value="UniProtKB-UniRule"/>
</dbReference>
<dbReference type="GO" id="GO:0046961">
    <property type="term" value="F:proton-transporting ATPase activity, rotational mechanism"/>
    <property type="evidence" value="ECO:0007669"/>
    <property type="project" value="InterPro"/>
</dbReference>
<dbReference type="GO" id="GO:0042777">
    <property type="term" value="P:proton motive force-driven plasma membrane ATP synthesis"/>
    <property type="evidence" value="ECO:0007669"/>
    <property type="project" value="UniProtKB-UniRule"/>
</dbReference>
<dbReference type="Gene3D" id="1.10.132.50">
    <property type="entry name" value="ATP synthase (C/AC39) subunit, domain 3"/>
    <property type="match status" value="1"/>
</dbReference>
<dbReference type="Gene3D" id="1.20.1690.10">
    <property type="entry name" value="V-type ATP synthase subunit C domain"/>
    <property type="match status" value="2"/>
</dbReference>
<dbReference type="HAMAP" id="MF_00314">
    <property type="entry name" value="ATP_synth_C_arch"/>
    <property type="match status" value="1"/>
</dbReference>
<dbReference type="InterPro" id="IPR036079">
    <property type="entry name" value="ATPase_csu/dsu_sf"/>
</dbReference>
<dbReference type="InterPro" id="IPR014272">
    <property type="entry name" value="ATPase_V0-cplx_csu"/>
</dbReference>
<dbReference type="InterPro" id="IPR002843">
    <property type="entry name" value="ATPase_V0-cplx_csu/dsu"/>
</dbReference>
<dbReference type="InterPro" id="IPR050873">
    <property type="entry name" value="V-ATPase_V0D/AC39_subunit"/>
</dbReference>
<dbReference type="InterPro" id="IPR035067">
    <property type="entry name" value="V-type_ATPase_csu/dsu"/>
</dbReference>
<dbReference type="InterPro" id="IPR044911">
    <property type="entry name" value="V-type_ATPase_csu/dsu_dom_3"/>
</dbReference>
<dbReference type="PANTHER" id="PTHR38682">
    <property type="entry name" value="V-TYPE ATP SYNTHASE SUBUNIT C"/>
    <property type="match status" value="1"/>
</dbReference>
<dbReference type="PANTHER" id="PTHR38682:SF1">
    <property type="entry name" value="V-TYPE ATP SYNTHASE SUBUNIT C"/>
    <property type="match status" value="1"/>
</dbReference>
<dbReference type="Pfam" id="PF01992">
    <property type="entry name" value="vATP-synt_AC39"/>
    <property type="match status" value="1"/>
</dbReference>
<dbReference type="SUPFAM" id="SSF103486">
    <property type="entry name" value="V-type ATP synthase subunit C"/>
    <property type="match status" value="1"/>
</dbReference>
<comment type="function">
    <text evidence="1">Produces ATP from ADP in the presence of a proton gradient across the membrane.</text>
</comment>
<comment type="similarity">
    <text evidence="1">Belongs to the V-ATPase V0D/AC39 subunit family.</text>
</comment>
<keyword id="KW-0066">ATP synthesis</keyword>
<keyword id="KW-0375">Hydrogen ion transport</keyword>
<keyword id="KW-0406">Ion transport</keyword>
<keyword id="KW-0813">Transport</keyword>
<protein>
    <recommendedName>
        <fullName evidence="1">V-type ATP synthase subunit C</fullName>
    </recommendedName>
    <alternativeName>
        <fullName evidence="1">V-ATPase subunit C</fullName>
    </alternativeName>
</protein>
<sequence length="323" mass="35947">MADDFAYLNARVRVRRGTLLKESFFQEALDLSFADFLRLLSETVYGGELAGQGLPDVDRAVLRTQAKLVGDLPRLVTGEAREAVRLLLLRNDLHNLQALLRAKATGRPFEEVLLLPGTLREEVWRQAYEAQDPAGMAQVLAVPGHPLARALRAVLRETQDLARVEALLAKRFFEDVAKAAKGLDQPALRDYLALEVDAENLRTAFKLQGSGLAPDAFFLKGGRFVDRVRFARLMEGDYAVLDELSGTPFSGLSGVRDLRALERGLRCVLLKEAKKGVQDPLGVGLVLAYVKEREWEAVRLRLLARRAYFGLPRAQVEEEVVCP</sequence>
<organism>
    <name type="scientific">Thermus thermophilus (strain ATCC BAA-163 / DSM 7039 / HB27)</name>
    <dbReference type="NCBI Taxonomy" id="262724"/>
    <lineage>
        <taxon>Bacteria</taxon>
        <taxon>Thermotogati</taxon>
        <taxon>Deinococcota</taxon>
        <taxon>Deinococci</taxon>
        <taxon>Thermales</taxon>
        <taxon>Thermaceae</taxon>
        <taxon>Thermus</taxon>
    </lineage>
</organism>
<proteinExistence type="inferred from homology"/>
<name>VATC_THET2</name>